<feature type="chain" id="PRO_0000377595" description="Vacuolar ATPase assembly integral membrane protein VMA21">
    <location>
        <begin position="1"/>
        <end position="80"/>
    </location>
</feature>
<feature type="topological domain" description="Cytoplasmic" evidence="1">
    <location>
        <begin position="1"/>
        <end position="14"/>
    </location>
</feature>
<feature type="transmembrane region" description="Helical" evidence="1">
    <location>
        <begin position="15"/>
        <end position="35"/>
    </location>
</feature>
<feature type="topological domain" description="Lumenal" evidence="1">
    <location>
        <begin position="36"/>
        <end position="39"/>
    </location>
</feature>
<feature type="transmembrane region" description="Helical" evidence="1">
    <location>
        <begin position="40"/>
        <end position="60"/>
    </location>
</feature>
<feature type="topological domain" description="Cytoplasmic" evidence="1">
    <location>
        <begin position="61"/>
        <end position="80"/>
    </location>
</feature>
<feature type="short sequence motif" description="Prevents secretion from ER">
    <location>
        <begin position="77"/>
        <end position="80"/>
    </location>
</feature>
<sequence>MAAEIPTSVIQKLVFFTGAMIIFPIFTFFVCQYLFSNNALISGGIAALMANVVLIGYVVVAFTEDTSSLADEKVETKKDI</sequence>
<gene>
    <name evidence="1" type="primary">VMA21</name>
    <name type="ORF">PICST_58812</name>
</gene>
<accession>A3LU53</accession>
<evidence type="ECO:0000255" key="1">
    <source>
        <dbReference type="HAMAP-Rule" id="MF_03058"/>
    </source>
</evidence>
<protein>
    <recommendedName>
        <fullName evidence="1">Vacuolar ATPase assembly integral membrane protein VMA21</fullName>
    </recommendedName>
</protein>
<organism>
    <name type="scientific">Scheffersomyces stipitis (strain ATCC 58785 / CBS 6054 / NBRC 10063 / NRRL Y-11545)</name>
    <name type="common">Yeast</name>
    <name type="synonym">Pichia stipitis</name>
    <dbReference type="NCBI Taxonomy" id="322104"/>
    <lineage>
        <taxon>Eukaryota</taxon>
        <taxon>Fungi</taxon>
        <taxon>Dikarya</taxon>
        <taxon>Ascomycota</taxon>
        <taxon>Saccharomycotina</taxon>
        <taxon>Pichiomycetes</taxon>
        <taxon>Debaryomycetaceae</taxon>
        <taxon>Scheffersomyces</taxon>
    </lineage>
</organism>
<proteinExistence type="inferred from homology"/>
<reference key="1">
    <citation type="journal article" date="2007" name="Nat. Biotechnol.">
        <title>Genome sequence of the lignocellulose-bioconverting and xylose-fermenting yeast Pichia stipitis.</title>
        <authorList>
            <person name="Jeffries T.W."/>
            <person name="Grigoriev I.V."/>
            <person name="Grimwood J."/>
            <person name="Laplaza J.M."/>
            <person name="Aerts A."/>
            <person name="Salamov A."/>
            <person name="Schmutz J."/>
            <person name="Lindquist E."/>
            <person name="Dehal P."/>
            <person name="Shapiro H."/>
            <person name="Jin Y.-S."/>
            <person name="Passoth V."/>
            <person name="Richardson P.M."/>
        </authorList>
    </citation>
    <scope>NUCLEOTIDE SEQUENCE [LARGE SCALE GENOMIC DNA]</scope>
    <source>
        <strain>ATCC 58785 / CBS 6054 / NBRC 10063 / NRRL Y-11545</strain>
    </source>
</reference>
<name>VMA21_PICST</name>
<keyword id="KW-0968">Cytoplasmic vesicle</keyword>
<keyword id="KW-0256">Endoplasmic reticulum</keyword>
<keyword id="KW-0472">Membrane</keyword>
<keyword id="KW-1185">Reference proteome</keyword>
<keyword id="KW-0812">Transmembrane</keyword>
<keyword id="KW-1133">Transmembrane helix</keyword>
<comment type="function">
    <text evidence="1">Required for the assembly of the V0 complex of the vacuolar ATPase (V-ATPase) in the endoplasmic reticulum.</text>
</comment>
<comment type="subcellular location">
    <subcellularLocation>
        <location evidence="1">Endoplasmic reticulum membrane</location>
        <topology evidence="1">Multi-pass membrane protein</topology>
    </subcellularLocation>
    <subcellularLocation>
        <location evidence="1">Endoplasmic reticulum-Golgi intermediate compartment membrane</location>
        <topology evidence="1">Multi-pass membrane protein</topology>
    </subcellularLocation>
    <subcellularLocation>
        <location evidence="1">Cytoplasmic vesicle</location>
        <location evidence="1">COPII-coated vesicle membrane</location>
        <topology evidence="1">Multi-pass membrane protein</topology>
    </subcellularLocation>
</comment>
<comment type="similarity">
    <text evidence="1">Belongs to the VMA21 family.</text>
</comment>
<dbReference type="EMBL" id="CP000498">
    <property type="protein sequence ID" value="ABN66181.2"/>
    <property type="molecule type" value="Genomic_DNA"/>
</dbReference>
<dbReference type="RefSeq" id="XP_001384210.2">
    <property type="nucleotide sequence ID" value="XM_001384173.1"/>
</dbReference>
<dbReference type="SMR" id="A3LU53"/>
<dbReference type="FunCoup" id="A3LU53">
    <property type="interactions" value="59"/>
</dbReference>
<dbReference type="STRING" id="322104.A3LU53"/>
<dbReference type="GeneID" id="4839028"/>
<dbReference type="KEGG" id="pic:PICST_58812"/>
<dbReference type="eggNOG" id="ENOG502SBNA">
    <property type="taxonomic scope" value="Eukaryota"/>
</dbReference>
<dbReference type="HOGENOM" id="CLU_154717_1_0_1"/>
<dbReference type="InParanoid" id="A3LU53"/>
<dbReference type="OMA" id="VMAFMED"/>
<dbReference type="OrthoDB" id="160405at2759"/>
<dbReference type="Proteomes" id="UP000002258">
    <property type="component" value="Chromosome 4"/>
</dbReference>
<dbReference type="GO" id="GO:0005789">
    <property type="term" value="C:endoplasmic reticulum membrane"/>
    <property type="evidence" value="ECO:0007669"/>
    <property type="project" value="UniProtKB-SubCell"/>
</dbReference>
<dbReference type="GO" id="GO:0033116">
    <property type="term" value="C:endoplasmic reticulum-Golgi intermediate compartment membrane"/>
    <property type="evidence" value="ECO:0007669"/>
    <property type="project" value="UniProtKB-SubCell"/>
</dbReference>
<dbReference type="GO" id="GO:0012507">
    <property type="term" value="C:ER to Golgi transport vesicle membrane"/>
    <property type="evidence" value="ECO:0007669"/>
    <property type="project" value="UniProtKB-SubCell"/>
</dbReference>
<dbReference type="GO" id="GO:0070072">
    <property type="term" value="P:vacuolar proton-transporting V-type ATPase complex assembly"/>
    <property type="evidence" value="ECO:0007669"/>
    <property type="project" value="UniProtKB-UniRule"/>
</dbReference>
<dbReference type="HAMAP" id="MF_03058">
    <property type="entry name" value="VMA21"/>
    <property type="match status" value="1"/>
</dbReference>
<dbReference type="InterPro" id="IPR019013">
    <property type="entry name" value="Vma21"/>
</dbReference>
<dbReference type="Pfam" id="PF09446">
    <property type="entry name" value="VMA21"/>
    <property type="match status" value="1"/>
</dbReference>